<name>RK23_ORYSJ</name>
<keyword id="KW-0150">Chloroplast</keyword>
<keyword id="KW-0934">Plastid</keyword>
<keyword id="KW-1185">Reference proteome</keyword>
<keyword id="KW-0687">Ribonucleoprotein</keyword>
<keyword id="KW-0689">Ribosomal protein</keyword>
<keyword id="KW-0694">RNA-binding</keyword>
<keyword id="KW-0699">rRNA-binding</keyword>
<geneLocation type="chloroplast"/>
<evidence type="ECO:0000250" key="1"/>
<evidence type="ECO:0000305" key="2"/>
<proteinExistence type="inferred from homology"/>
<sequence>MDGIKYAVFTEKSLRLLGKNQYTFNVESGFTKTEIKHWVELFFGVKVVAVNSHRLPGKGRRMGPILGHTMHYRRMIITLQPGYSIPLLDREKN</sequence>
<accession>P0C451</accession>
<accession>P12097</accession>
<accession>Q6QXY1</accession>
<accession>Q6QY29</accession>
<gene>
    <name type="primary">rpl23-A</name>
    <name type="ORF">Nip215a</name>
</gene>
<gene>
    <name type="primary">rpl23-B</name>
    <name type="ORF">Nip215b</name>
</gene>
<dbReference type="EMBL" id="M22826">
    <property type="protein sequence ID" value="AAA84593.1"/>
    <property type="molecule type" value="Genomic_DNA"/>
</dbReference>
<dbReference type="EMBL" id="L40578">
    <property type="protein sequence ID" value="AAD15253.1"/>
    <property type="molecule type" value="Genomic_DNA"/>
</dbReference>
<dbReference type="EMBL" id="X15901">
    <property type="protein sequence ID" value="CAA33923.1"/>
    <property type="molecule type" value="Genomic_DNA"/>
</dbReference>
<dbReference type="EMBL" id="X15901">
    <property type="protein sequence ID" value="CAA33938.1"/>
    <property type="molecule type" value="Genomic_DNA"/>
</dbReference>
<dbReference type="EMBL" id="AY522330">
    <property type="protein sequence ID" value="AAS46150.1"/>
    <property type="molecule type" value="Genomic_DNA"/>
</dbReference>
<dbReference type="EMBL" id="AY522330">
    <property type="protein sequence ID" value="AAS46165.1"/>
    <property type="molecule type" value="Genomic_DNA"/>
</dbReference>
<dbReference type="EMBL" id="AP005683">
    <property type="protein sequence ID" value="BAD33778.1"/>
    <property type="molecule type" value="Genomic_DNA"/>
</dbReference>
<dbReference type="EMBL" id="AP005707">
    <property type="protein sequence ID" value="BAD36255.1"/>
    <property type="molecule type" value="Genomic_DNA"/>
</dbReference>
<dbReference type="EMBL" id="AP006052">
    <property type="protein sequence ID" value="BAD31897.1"/>
    <property type="molecule type" value="Genomic_DNA"/>
</dbReference>
<dbReference type="PIR" id="JQ0271">
    <property type="entry name" value="R5RZ23"/>
</dbReference>
<dbReference type="SMR" id="P0C451"/>
<dbReference type="FunCoup" id="P0C451">
    <property type="interactions" value="60"/>
</dbReference>
<dbReference type="STRING" id="39947.P0C451"/>
<dbReference type="PaxDb" id="39947-P0C451"/>
<dbReference type="EnsemblPlants" id="transcript-rpl23">
    <property type="protein sequence ID" value="cds-CAA33938.1"/>
    <property type="gene ID" value="gene-rpl23"/>
</dbReference>
<dbReference type="EnsemblPlants" id="transcript-rpl23-2">
    <property type="protein sequence ID" value="cds-CAA33923.1"/>
    <property type="gene ID" value="gene-rpl23-2"/>
</dbReference>
<dbReference type="Gramene" id="transcript-rpl23">
    <property type="protein sequence ID" value="cds-CAA33938.1"/>
    <property type="gene ID" value="gene-rpl23"/>
</dbReference>
<dbReference type="Gramene" id="transcript-rpl23-2">
    <property type="protein sequence ID" value="cds-CAA33923.1"/>
    <property type="gene ID" value="gene-rpl23-2"/>
</dbReference>
<dbReference type="KEGG" id="dosa:rpl23"/>
<dbReference type="KEGG" id="dosa:rpl23.1"/>
<dbReference type="KEGG" id="osa:3131427"/>
<dbReference type="KEGG" id="osa:3131428"/>
<dbReference type="InParanoid" id="P0C451"/>
<dbReference type="OrthoDB" id="563989at2759"/>
<dbReference type="Proteomes" id="UP000000763">
    <property type="component" value="Chromosome 7"/>
</dbReference>
<dbReference type="Proteomes" id="UP000000763">
    <property type="component" value="Chromosome 9"/>
</dbReference>
<dbReference type="Proteomes" id="UP000059680">
    <property type="component" value="Chloroplast"/>
</dbReference>
<dbReference type="GO" id="GO:0009507">
    <property type="term" value="C:chloroplast"/>
    <property type="evidence" value="ECO:0007669"/>
    <property type="project" value="UniProtKB-SubCell"/>
</dbReference>
<dbReference type="GO" id="GO:0022625">
    <property type="term" value="C:cytosolic large ribosomal subunit"/>
    <property type="evidence" value="ECO:0000318"/>
    <property type="project" value="GO_Central"/>
</dbReference>
<dbReference type="GO" id="GO:0009536">
    <property type="term" value="C:plastid"/>
    <property type="evidence" value="ECO:0000305"/>
    <property type="project" value="Gramene"/>
</dbReference>
<dbReference type="GO" id="GO:0019843">
    <property type="term" value="F:rRNA binding"/>
    <property type="evidence" value="ECO:0007669"/>
    <property type="project" value="UniProtKB-UniRule"/>
</dbReference>
<dbReference type="GO" id="GO:0003735">
    <property type="term" value="F:structural constituent of ribosome"/>
    <property type="evidence" value="ECO:0000318"/>
    <property type="project" value="GO_Central"/>
</dbReference>
<dbReference type="GO" id="GO:0006412">
    <property type="term" value="P:translation"/>
    <property type="evidence" value="ECO:0007669"/>
    <property type="project" value="UniProtKB-UniRule"/>
</dbReference>
<dbReference type="FunFam" id="3.30.70.330:FF:000002">
    <property type="entry name" value="50S ribosomal protein L23, chloroplastic"/>
    <property type="match status" value="1"/>
</dbReference>
<dbReference type="Gene3D" id="3.30.70.330">
    <property type="match status" value="1"/>
</dbReference>
<dbReference type="HAMAP" id="MF_01369_B">
    <property type="entry name" value="Ribosomal_uL23_B"/>
    <property type="match status" value="1"/>
</dbReference>
<dbReference type="InterPro" id="IPR012677">
    <property type="entry name" value="Nucleotide-bd_a/b_plait_sf"/>
</dbReference>
<dbReference type="InterPro" id="IPR013025">
    <property type="entry name" value="Ribosomal_uL23-like"/>
</dbReference>
<dbReference type="InterPro" id="IPR012678">
    <property type="entry name" value="Ribosomal_uL23/eL15/eS24_sf"/>
</dbReference>
<dbReference type="InterPro" id="IPR001014">
    <property type="entry name" value="Ribosomal_uL23_CS"/>
</dbReference>
<dbReference type="PANTHER" id="PTHR11620">
    <property type="entry name" value="60S RIBOSOMAL PROTEIN L23A"/>
    <property type="match status" value="1"/>
</dbReference>
<dbReference type="Pfam" id="PF00276">
    <property type="entry name" value="Ribosomal_L23"/>
    <property type="match status" value="1"/>
</dbReference>
<dbReference type="SUPFAM" id="SSF54189">
    <property type="entry name" value="Ribosomal proteins S24e, L23 and L15e"/>
    <property type="match status" value="1"/>
</dbReference>
<dbReference type="PROSITE" id="PS00050">
    <property type="entry name" value="RIBOSOMAL_L23"/>
    <property type="match status" value="1"/>
</dbReference>
<protein>
    <recommendedName>
        <fullName evidence="2">Large ribosomal subunit protein uL23cz/uL23cy</fullName>
    </recommendedName>
    <alternativeName>
        <fullName>50S ribosomal protein L23, chloroplastic</fullName>
    </alternativeName>
</protein>
<organism>
    <name type="scientific">Oryza sativa subsp. japonica</name>
    <name type="common">Rice</name>
    <dbReference type="NCBI Taxonomy" id="39947"/>
    <lineage>
        <taxon>Eukaryota</taxon>
        <taxon>Viridiplantae</taxon>
        <taxon>Streptophyta</taxon>
        <taxon>Embryophyta</taxon>
        <taxon>Tracheophyta</taxon>
        <taxon>Spermatophyta</taxon>
        <taxon>Magnoliopsida</taxon>
        <taxon>Liliopsida</taxon>
        <taxon>Poales</taxon>
        <taxon>Poaceae</taxon>
        <taxon>BOP clade</taxon>
        <taxon>Oryzoideae</taxon>
        <taxon>Oryzeae</taxon>
        <taxon>Oryzinae</taxon>
        <taxon>Oryza</taxon>
        <taxon>Oryza sativa</taxon>
    </lineage>
</organism>
<feature type="chain" id="PRO_0000290050" description="Large ribosomal subunit protein uL23cz/uL23cy">
    <location>
        <begin position="1"/>
        <end position="93"/>
    </location>
</feature>
<feature type="sequence conflict" description="In Ref. 1; AAA84593." evidence="2" ref="1">
    <original>R</original>
    <variation>A</variation>
    <location>
        <position position="15"/>
    </location>
</feature>
<reference key="1">
    <citation type="journal article" date="1988" name="Gene">
        <title>Organization and nucleotide sequence of genes at both junctions between the two inverted repeats and the large single-copy region in the rice chloroplast genome.</title>
        <authorList>
            <person name="Moon E."/>
            <person name="Wu R."/>
        </authorList>
    </citation>
    <scope>NUCLEOTIDE SEQUENCE [GENOMIC DNA]</scope>
    <source>
        <strain>cv. Labelle</strain>
        <tissue>Seedling</tissue>
    </source>
</reference>
<reference key="2">
    <citation type="journal article" date="1989" name="Mol. Gen. Genet.">
        <title>The complete sequence of the rice (Oryza sativa) chloroplast genome: intermolecular recombination between distinct tRNA genes accounts for a major plastid DNA inversion during the evolution of the cereals.</title>
        <authorList>
            <person name="Hiratsuka J."/>
            <person name="Shimada H."/>
            <person name="Whittier R."/>
            <person name="Ishibashi T."/>
            <person name="Sakamoto M."/>
            <person name="Mori M."/>
            <person name="Kondo C."/>
            <person name="Honji Y."/>
            <person name="Sun C.-R."/>
            <person name="Meng B.-Y."/>
            <person name="Li Y.-Q."/>
            <person name="Kanno A."/>
            <person name="Nishizawa Y."/>
            <person name="Hirai A."/>
            <person name="Shinozaki K."/>
            <person name="Sugiura M."/>
        </authorList>
    </citation>
    <scope>NUCLEOTIDE SEQUENCE [LARGE SCALE GENOMIC DNA]</scope>
    <source>
        <strain>cv. Nipponbare</strain>
    </source>
</reference>
<reference key="3">
    <citation type="journal article" date="2004" name="Plant Physiol.">
        <title>A comparison of rice chloroplast genomes.</title>
        <authorList>
            <person name="Tang J."/>
            <person name="Xia H."/>
            <person name="Cao M."/>
            <person name="Zhang X."/>
            <person name="Zeng W."/>
            <person name="Hu S."/>
            <person name="Tong W."/>
            <person name="Wang J."/>
            <person name="Wang J."/>
            <person name="Yu J."/>
            <person name="Yang H."/>
            <person name="Zhu L."/>
        </authorList>
    </citation>
    <scope>NUCLEOTIDE SEQUENCE [LARGE SCALE GENOMIC DNA]</scope>
    <source>
        <strain>cv. Nipponbare</strain>
    </source>
</reference>
<reference key="4">
    <citation type="journal article" date="2005" name="Nature">
        <title>The map-based sequence of the rice genome.</title>
        <authorList>
            <consortium name="International rice genome sequencing project (IRGSP)"/>
        </authorList>
    </citation>
    <scope>NUCLEOTIDE SEQUENCE [LARGE SCALE GENOMIC DNA]</scope>
    <source>
        <strain>cv. Nipponbare</strain>
    </source>
</reference>
<reference key="5">
    <citation type="journal article" date="2008" name="Nucleic Acids Res.">
        <title>The rice annotation project database (RAP-DB): 2008 update.</title>
        <authorList>
            <consortium name="The rice annotation project (RAP)"/>
        </authorList>
    </citation>
    <scope>GENOME REANNOTATION</scope>
    <source>
        <strain>cv. Nipponbare</strain>
    </source>
</reference>
<comment type="function">
    <text evidence="1">Binds to 23S rRNA.</text>
</comment>
<comment type="subunit">
    <text evidence="1">Part of the 50S ribosomal subunit.</text>
</comment>
<comment type="subcellular location">
    <subcellularLocation>
        <location>Plastid</location>
        <location>Chloroplast</location>
    </subcellularLocation>
</comment>
<comment type="similarity">
    <text evidence="2">Belongs to the universal ribosomal protein uL23 family.</text>
</comment>
<comment type="caution">
    <text evidence="2">A stretch of the chloroplast genome is duplicated within chromosomes 7 and 9 resulting in the duplication of the gene. The expression of these duplicated genes has not been demonstrated.</text>
</comment>